<dbReference type="EMBL" id="X74323">
    <property type="protein sequence ID" value="CAA52370.1"/>
    <property type="molecule type" value="mRNA"/>
</dbReference>
<dbReference type="PIR" id="I50589">
    <property type="entry name" value="I50589"/>
</dbReference>
<dbReference type="PIR" id="S35941">
    <property type="entry name" value="S35941"/>
</dbReference>
<dbReference type="RefSeq" id="NP_990481.1">
    <property type="nucleotide sequence ID" value="NM_205150.3"/>
</dbReference>
<dbReference type="SMR" id="Q08727"/>
<dbReference type="BioGRID" id="676323">
    <property type="interactions" value="1"/>
</dbReference>
<dbReference type="FunCoup" id="Q08727">
    <property type="interactions" value="129"/>
</dbReference>
<dbReference type="STRING" id="9031.ENSGALP00000044883"/>
<dbReference type="PaxDb" id="9031-ENSGALP00000017982"/>
<dbReference type="Ensembl" id="ENSGALT00010004079.1">
    <property type="protein sequence ID" value="ENSGALP00010002376.1"/>
    <property type="gene ID" value="ENSGALG00010001790.1"/>
</dbReference>
<dbReference type="GeneID" id="396055"/>
<dbReference type="KEGG" id="gga:396055"/>
<dbReference type="CTD" id="3199"/>
<dbReference type="VEuPathDB" id="HostDB:geneid_396055"/>
<dbReference type="eggNOG" id="KOG0489">
    <property type="taxonomic scope" value="Eukaryota"/>
</dbReference>
<dbReference type="GeneTree" id="ENSGT00940000155029"/>
<dbReference type="HOGENOM" id="CLU_048378_0_0_1"/>
<dbReference type="InParanoid" id="Q08727"/>
<dbReference type="OMA" id="IHDFQPF"/>
<dbReference type="OrthoDB" id="6159439at2759"/>
<dbReference type="PhylomeDB" id="Q08727"/>
<dbReference type="PRO" id="PR:Q08727"/>
<dbReference type="Proteomes" id="UP000000539">
    <property type="component" value="Chromosome 2"/>
</dbReference>
<dbReference type="Bgee" id="ENSGALG00000040521">
    <property type="expression patterns" value="Expressed in ovary and 7 other cell types or tissues"/>
</dbReference>
<dbReference type="GO" id="GO:0005634">
    <property type="term" value="C:nucleus"/>
    <property type="evidence" value="ECO:0000318"/>
    <property type="project" value="GO_Central"/>
</dbReference>
<dbReference type="GO" id="GO:0000981">
    <property type="term" value="F:DNA-binding transcription factor activity, RNA polymerase II-specific"/>
    <property type="evidence" value="ECO:0000318"/>
    <property type="project" value="GO_Central"/>
</dbReference>
<dbReference type="GO" id="GO:0000978">
    <property type="term" value="F:RNA polymerase II cis-regulatory region sequence-specific DNA binding"/>
    <property type="evidence" value="ECO:0000318"/>
    <property type="project" value="GO_Central"/>
</dbReference>
<dbReference type="GO" id="GO:0006357">
    <property type="term" value="P:regulation of transcription by RNA polymerase II"/>
    <property type="evidence" value="ECO:0000318"/>
    <property type="project" value="GO_Central"/>
</dbReference>
<dbReference type="CDD" id="cd00086">
    <property type="entry name" value="homeodomain"/>
    <property type="match status" value="1"/>
</dbReference>
<dbReference type="FunFam" id="1.10.10.60:FF:000145">
    <property type="entry name" value="homeobox protein Hox-A2"/>
    <property type="match status" value="1"/>
</dbReference>
<dbReference type="Gene3D" id="1.10.10.60">
    <property type="entry name" value="Homeodomain-like"/>
    <property type="match status" value="1"/>
</dbReference>
<dbReference type="InterPro" id="IPR001356">
    <property type="entry name" value="HD"/>
</dbReference>
<dbReference type="InterPro" id="IPR020479">
    <property type="entry name" value="HD_metazoa"/>
</dbReference>
<dbReference type="InterPro" id="IPR001827">
    <property type="entry name" value="Homeobox_Antennapedia_CS"/>
</dbReference>
<dbReference type="InterPro" id="IPR017970">
    <property type="entry name" value="Homeobox_CS"/>
</dbReference>
<dbReference type="InterPro" id="IPR009057">
    <property type="entry name" value="Homeodomain-like_sf"/>
</dbReference>
<dbReference type="PANTHER" id="PTHR45664:SF3">
    <property type="entry name" value="HOMEOBOX PROTEIN HOX-A2"/>
    <property type="match status" value="1"/>
</dbReference>
<dbReference type="PANTHER" id="PTHR45664">
    <property type="entry name" value="PROTEIN ZERKNUELLT 1-RELATED"/>
    <property type="match status" value="1"/>
</dbReference>
<dbReference type="Pfam" id="PF00046">
    <property type="entry name" value="Homeodomain"/>
    <property type="match status" value="1"/>
</dbReference>
<dbReference type="PRINTS" id="PR00024">
    <property type="entry name" value="HOMEOBOX"/>
</dbReference>
<dbReference type="SMART" id="SM00389">
    <property type="entry name" value="HOX"/>
    <property type="match status" value="1"/>
</dbReference>
<dbReference type="SUPFAM" id="SSF46689">
    <property type="entry name" value="Homeodomain-like"/>
    <property type="match status" value="1"/>
</dbReference>
<dbReference type="PROSITE" id="PS00032">
    <property type="entry name" value="ANTENNAPEDIA"/>
    <property type="match status" value="1"/>
</dbReference>
<dbReference type="PROSITE" id="PS00027">
    <property type="entry name" value="HOMEOBOX_1"/>
    <property type="match status" value="1"/>
</dbReference>
<dbReference type="PROSITE" id="PS50071">
    <property type="entry name" value="HOMEOBOX_2"/>
    <property type="match status" value="1"/>
</dbReference>
<comment type="function">
    <text>Sequence-specific transcription factor which is part of a developmental regulatory system that provides cells with specific positional identities on the anterior-posterior axis.</text>
</comment>
<comment type="subcellular location">
    <subcellularLocation>
        <location>Nucleus</location>
    </subcellularLocation>
</comment>
<comment type="similarity">
    <text evidence="3">Belongs to the Antp homeobox family. Proboscipedia subfamily.</text>
</comment>
<keyword id="KW-0217">Developmental protein</keyword>
<keyword id="KW-0238">DNA-binding</keyword>
<keyword id="KW-0371">Homeobox</keyword>
<keyword id="KW-0539">Nucleus</keyword>
<keyword id="KW-1185">Reference proteome</keyword>
<keyword id="KW-0804">Transcription</keyword>
<keyword id="KW-0805">Transcription regulation</keyword>
<organism>
    <name type="scientific">Gallus gallus</name>
    <name type="common">Chicken</name>
    <dbReference type="NCBI Taxonomy" id="9031"/>
    <lineage>
        <taxon>Eukaryota</taxon>
        <taxon>Metazoa</taxon>
        <taxon>Chordata</taxon>
        <taxon>Craniata</taxon>
        <taxon>Vertebrata</taxon>
        <taxon>Euteleostomi</taxon>
        <taxon>Archelosauria</taxon>
        <taxon>Archosauria</taxon>
        <taxon>Dinosauria</taxon>
        <taxon>Saurischia</taxon>
        <taxon>Theropoda</taxon>
        <taxon>Coelurosauria</taxon>
        <taxon>Aves</taxon>
        <taxon>Neognathae</taxon>
        <taxon>Galloanserae</taxon>
        <taxon>Galliformes</taxon>
        <taxon>Phasianidae</taxon>
        <taxon>Phasianinae</taxon>
        <taxon>Gallus</taxon>
    </lineage>
</organism>
<name>HXA2_CHICK</name>
<gene>
    <name type="primary">HOXA2</name>
    <name type="synonym">HOXA-2</name>
</gene>
<sequence>MNFEFEREIGFINSQPSLAECLTSFPPVGDTFQSSSIKNSTLSHSTLIPPPFEQTIPSLNPGGHPRHSGGGRPKASPRARSGSPGPAGAPPPPEYPWMKEKKASKRSSLPPASASASAAGPACLSHKDPLEIPDSGSGGSRRLRTAYTNTQLLELEKEFHFNKYLCRPRRVEIAALLDLTERQVKVWFQNRRMKHKRQTQCKENQNGEGKFKGSEDPEKAAEDDEEEKALFEQALGTVSGALLEREGYAFQQNALSQQQAQNAHNGESQSFPVSPLTSNEKNLKHFQHQSPTVQNCLSTMAQNCAAGLNNDSPEALEVPSLQDFNVFSTDSCLQLSDAVSPSLPGSLDSPVDISADSFDFFTDTLTTIDLQHLNY</sequence>
<reference key="1">
    <citation type="journal article" date="1994" name="Development">
        <title>Hoxa-2 expression in normal and transposed rhombomeres: independent regulation in the neural tube and neural crest.</title>
        <authorList>
            <person name="Prince V.E."/>
            <person name="Lumsden A."/>
        </authorList>
    </citation>
    <scope>NUCLEOTIDE SEQUENCE [MRNA]</scope>
</reference>
<evidence type="ECO:0000255" key="1">
    <source>
        <dbReference type="PROSITE-ProRule" id="PRU00108"/>
    </source>
</evidence>
<evidence type="ECO:0000256" key="2">
    <source>
        <dbReference type="SAM" id="MobiDB-lite"/>
    </source>
</evidence>
<evidence type="ECO:0000305" key="3"/>
<proteinExistence type="evidence at transcript level"/>
<feature type="chain" id="PRO_0000200039" description="Homeobox protein Hox-A2">
    <location>
        <begin position="1"/>
        <end position="375"/>
    </location>
</feature>
<feature type="DNA-binding region" description="Homeobox" evidence="1">
    <location>
        <begin position="140"/>
        <end position="199"/>
    </location>
</feature>
<feature type="region of interest" description="Disordered" evidence="2">
    <location>
        <begin position="29"/>
        <end position="142"/>
    </location>
</feature>
<feature type="region of interest" description="Disordered" evidence="2">
    <location>
        <begin position="193"/>
        <end position="223"/>
    </location>
</feature>
<feature type="region of interest" description="Disordered" evidence="2">
    <location>
        <begin position="255"/>
        <end position="277"/>
    </location>
</feature>
<feature type="short sequence motif" description="Antp-type hexapeptide">
    <location>
        <begin position="94"/>
        <end position="99"/>
    </location>
</feature>
<feature type="compositionally biased region" description="Polar residues" evidence="2">
    <location>
        <begin position="31"/>
        <end position="46"/>
    </location>
</feature>
<feature type="compositionally biased region" description="Low complexity" evidence="2">
    <location>
        <begin position="76"/>
        <end position="86"/>
    </location>
</feature>
<feature type="compositionally biased region" description="Low complexity" evidence="2">
    <location>
        <begin position="106"/>
        <end position="124"/>
    </location>
</feature>
<feature type="compositionally biased region" description="Basic and acidic residues" evidence="2">
    <location>
        <begin position="209"/>
        <end position="220"/>
    </location>
</feature>
<feature type="compositionally biased region" description="Low complexity" evidence="2">
    <location>
        <begin position="255"/>
        <end position="265"/>
    </location>
</feature>
<feature type="compositionally biased region" description="Polar residues" evidence="2">
    <location>
        <begin position="266"/>
        <end position="277"/>
    </location>
</feature>
<accession>Q08727</accession>
<protein>
    <recommendedName>
        <fullName>Homeobox protein Hox-A2</fullName>
    </recommendedName>
</protein>